<sequence>MGGGSNNSHNMDNGKYVRYTPEQVEALERLYNDCPKPSSMRRQQLIRECPILSNIEPKQIKVWFQNRRCREKQRKEASRLQAVNRKLTAMNKLLMEENDRLQKQVSHLVYENSYFRQHPQNQGNLATTDTSCESVVTSGQHHLTPQHQPRDASPAGLLSIADETLTEFISKATGTAVEWVQMPGMKPGPDSIGIVAISHGCTGIAARACGLVGLDPTRVAEILKDKPCWLRDCRSLDIVNVLSTANGGTLELIYMQLYAPTTLAPARDFWMLRYTSVMEDGSLVICERSLNNTQNGPSMPPSPHFVRAEILPSGYLIRPCEGGGSILHIVDHFDLEPWSVPEVLRSLYESSTLLAQRTTMAALRYLRQISQEISQPNVTGWGRRPAALRALSQRLSKGFNEAVNGFSDEGWSILESDGIDDVTLLVNSSPTKMMMTSSLPFANGYTSMPSAVLCAKASMLLQNVPPSILLRFLREHRQEWADNSIDAYSAAAIKAGPCSLPIPRPGSFGGQVILPLAHTIENEEFMEVIKLESLGHYQEDMMMPADIFLLQMCSGVDENAVESCAELIFAPIDASFSDDAPIIPSGFRIIPLDSKSEGLSPNRTLDLASALDVGSRTAGDSCGSRGNSKSVMTIAFQLAFEMHMQENVASMARQYVRSVIASVQRVALALSPSSHQLSGLRPPPASPEAHTLARWISHSYRCYLGVDLLKPHGTDLLKSLWHHPDAVMCCSLKALSPVFTFANQAGLDMLETTLVALQDITLDKIFDNNNGKKTLSSEFPQIMQQGFMCMDGGICMSSMGRAVTYEKAVGWKVLNDDEDPHCICFMFLNWSFI</sequence>
<gene>
    <name type="primary">ATHB-8</name>
    <name type="synonym">HB8</name>
    <name type="ordered locus">At4g32880</name>
    <name type="ORF">T16I18.90</name>
</gene>
<evidence type="ECO:0000255" key="1"/>
<evidence type="ECO:0000255" key="2">
    <source>
        <dbReference type="PROSITE-ProRule" id="PRU00108"/>
    </source>
</evidence>
<evidence type="ECO:0000255" key="3">
    <source>
        <dbReference type="PROSITE-ProRule" id="PRU00197"/>
    </source>
</evidence>
<evidence type="ECO:0000269" key="4">
    <source>
    </source>
</evidence>
<evidence type="ECO:0000269" key="5">
    <source>
    </source>
</evidence>
<evidence type="ECO:0000269" key="6">
    <source>
    </source>
</evidence>
<evidence type="ECO:0000269" key="7">
    <source>
    </source>
</evidence>
<evidence type="ECO:0000269" key="8">
    <source>
    </source>
</evidence>
<evidence type="ECO:0000269" key="9">
    <source>
    </source>
</evidence>
<evidence type="ECO:0000269" key="10">
    <source>
    </source>
</evidence>
<evidence type="ECO:0000305" key="11"/>
<dbReference type="EMBL" id="Z50851">
    <property type="protein sequence ID" value="CAA90703.1"/>
    <property type="molecule type" value="Genomic_DNA"/>
</dbReference>
<dbReference type="EMBL" id="AJ441292">
    <property type="protein sequence ID" value="CAD29660.1"/>
    <property type="molecule type" value="mRNA"/>
</dbReference>
<dbReference type="EMBL" id="AL161582">
    <property type="protein sequence ID" value="CAB80005.1"/>
    <property type="molecule type" value="Genomic_DNA"/>
</dbReference>
<dbReference type="EMBL" id="CP002687">
    <property type="protein sequence ID" value="AEE86138.1"/>
    <property type="molecule type" value="Genomic_DNA"/>
</dbReference>
<dbReference type="EMBL" id="AY099631">
    <property type="protein sequence ID" value="AAM20482.1"/>
    <property type="molecule type" value="mRNA"/>
</dbReference>
<dbReference type="EMBL" id="BT008798">
    <property type="protein sequence ID" value="AAP68237.1"/>
    <property type="molecule type" value="mRNA"/>
</dbReference>
<dbReference type="PIR" id="T10695">
    <property type="entry name" value="T10695"/>
</dbReference>
<dbReference type="RefSeq" id="NP_195014.1">
    <property type="nucleotide sequence ID" value="NM_119441.5"/>
</dbReference>
<dbReference type="SMR" id="Q39123"/>
<dbReference type="BioGRID" id="14709">
    <property type="interactions" value="2"/>
</dbReference>
<dbReference type="FunCoup" id="Q39123">
    <property type="interactions" value="46"/>
</dbReference>
<dbReference type="IntAct" id="Q39123">
    <property type="interactions" value="3"/>
</dbReference>
<dbReference type="STRING" id="3702.Q39123"/>
<dbReference type="iPTMnet" id="Q39123"/>
<dbReference type="PaxDb" id="3702-AT4G32880.1"/>
<dbReference type="ProteomicsDB" id="246557"/>
<dbReference type="EnsemblPlants" id="AT4G32880.1">
    <property type="protein sequence ID" value="AT4G32880.1"/>
    <property type="gene ID" value="AT4G32880"/>
</dbReference>
<dbReference type="GeneID" id="829424"/>
<dbReference type="Gramene" id="AT4G32880.1">
    <property type="protein sequence ID" value="AT4G32880.1"/>
    <property type="gene ID" value="AT4G32880"/>
</dbReference>
<dbReference type="KEGG" id="ath:AT4G32880"/>
<dbReference type="Araport" id="AT4G32880"/>
<dbReference type="TAIR" id="AT4G32880">
    <property type="gene designation" value="HB-8"/>
</dbReference>
<dbReference type="eggNOG" id="ENOG502QPKR">
    <property type="taxonomic scope" value="Eukaryota"/>
</dbReference>
<dbReference type="HOGENOM" id="CLU_012517_0_0_1"/>
<dbReference type="InParanoid" id="Q39123"/>
<dbReference type="OMA" id="HPQNQGN"/>
<dbReference type="PhylomeDB" id="Q39123"/>
<dbReference type="PRO" id="PR:Q39123"/>
<dbReference type="Proteomes" id="UP000006548">
    <property type="component" value="Chromosome 4"/>
</dbReference>
<dbReference type="ExpressionAtlas" id="Q39123">
    <property type="expression patterns" value="baseline and differential"/>
</dbReference>
<dbReference type="GO" id="GO:0005634">
    <property type="term" value="C:nucleus"/>
    <property type="evidence" value="ECO:0000314"/>
    <property type="project" value="TAIR"/>
</dbReference>
<dbReference type="GO" id="GO:0003700">
    <property type="term" value="F:DNA-binding transcription factor activity"/>
    <property type="evidence" value="ECO:0000250"/>
    <property type="project" value="TAIR"/>
</dbReference>
<dbReference type="GO" id="GO:0008289">
    <property type="term" value="F:lipid binding"/>
    <property type="evidence" value="ECO:0007669"/>
    <property type="project" value="InterPro"/>
</dbReference>
<dbReference type="GO" id="GO:0000976">
    <property type="term" value="F:transcription cis-regulatory region binding"/>
    <property type="evidence" value="ECO:0000353"/>
    <property type="project" value="TAIR"/>
</dbReference>
<dbReference type="GO" id="GO:0030154">
    <property type="term" value="P:cell differentiation"/>
    <property type="evidence" value="ECO:0007669"/>
    <property type="project" value="UniProtKB-KW"/>
</dbReference>
<dbReference type="GO" id="GO:0010014">
    <property type="term" value="P:meristem initiation"/>
    <property type="evidence" value="ECO:0000315"/>
    <property type="project" value="TAIR"/>
</dbReference>
<dbReference type="GO" id="GO:0045597">
    <property type="term" value="P:positive regulation of cell differentiation"/>
    <property type="evidence" value="ECO:0000315"/>
    <property type="project" value="TAIR"/>
</dbReference>
<dbReference type="GO" id="GO:0008284">
    <property type="term" value="P:positive regulation of cell population proliferation"/>
    <property type="evidence" value="ECO:0000315"/>
    <property type="project" value="TAIR"/>
</dbReference>
<dbReference type="GO" id="GO:0010072">
    <property type="term" value="P:primary shoot apical meristem specification"/>
    <property type="evidence" value="ECO:0000315"/>
    <property type="project" value="TAIR"/>
</dbReference>
<dbReference type="GO" id="GO:0010067">
    <property type="term" value="P:procambium histogenesis"/>
    <property type="evidence" value="ECO:0000270"/>
    <property type="project" value="TAIR"/>
</dbReference>
<dbReference type="GO" id="GO:0009733">
    <property type="term" value="P:response to auxin"/>
    <property type="evidence" value="ECO:0000270"/>
    <property type="project" value="TAIR"/>
</dbReference>
<dbReference type="GO" id="GO:0010089">
    <property type="term" value="P:xylem development"/>
    <property type="evidence" value="ECO:0000315"/>
    <property type="project" value="TAIR"/>
</dbReference>
<dbReference type="CDD" id="cd14686">
    <property type="entry name" value="bZIP"/>
    <property type="match status" value="1"/>
</dbReference>
<dbReference type="CDD" id="cd00086">
    <property type="entry name" value="homeodomain"/>
    <property type="match status" value="1"/>
</dbReference>
<dbReference type="CDD" id="cd08875">
    <property type="entry name" value="START_ArGLABRA2_like"/>
    <property type="match status" value="1"/>
</dbReference>
<dbReference type="FunFam" id="3.30.530.20:FF:000020">
    <property type="entry name" value="homeobox-leucine zipper protein ATHB-15"/>
    <property type="match status" value="1"/>
</dbReference>
<dbReference type="FunFam" id="1.10.10.60:FF:000197">
    <property type="entry name" value="Homeobox-leucine zipper protein REVOLUTA"/>
    <property type="match status" value="1"/>
</dbReference>
<dbReference type="Gene3D" id="3.30.530.20">
    <property type="match status" value="1"/>
</dbReference>
<dbReference type="Gene3D" id="1.10.10.60">
    <property type="entry name" value="Homeodomain-like"/>
    <property type="match status" value="1"/>
</dbReference>
<dbReference type="InterPro" id="IPR001356">
    <property type="entry name" value="HD"/>
</dbReference>
<dbReference type="InterPro" id="IPR044830">
    <property type="entry name" value="HD-Zip_III"/>
</dbReference>
<dbReference type="InterPro" id="IPR009057">
    <property type="entry name" value="Homeodomain-like_sf"/>
</dbReference>
<dbReference type="InterPro" id="IPR013978">
    <property type="entry name" value="MEKHLA"/>
</dbReference>
<dbReference type="InterPro" id="IPR023393">
    <property type="entry name" value="START-like_dom_sf"/>
</dbReference>
<dbReference type="InterPro" id="IPR002913">
    <property type="entry name" value="START_lipid-bd_dom"/>
</dbReference>
<dbReference type="PANTHER" id="PTHR45950">
    <property type="entry name" value="HOMEOBOX-LEUCINE ZIPPER PROTEIN ATHB-14"/>
    <property type="match status" value="1"/>
</dbReference>
<dbReference type="PANTHER" id="PTHR45950:SF6">
    <property type="entry name" value="HOMEOBOX-LEUCINE ZIPPER PROTEIN ATHB-8"/>
    <property type="match status" value="1"/>
</dbReference>
<dbReference type="Pfam" id="PF00046">
    <property type="entry name" value="Homeodomain"/>
    <property type="match status" value="1"/>
</dbReference>
<dbReference type="Pfam" id="PF08670">
    <property type="entry name" value="MEKHLA"/>
    <property type="match status" value="1"/>
</dbReference>
<dbReference type="Pfam" id="PF01852">
    <property type="entry name" value="START"/>
    <property type="match status" value="1"/>
</dbReference>
<dbReference type="SMART" id="SM00389">
    <property type="entry name" value="HOX"/>
    <property type="match status" value="1"/>
</dbReference>
<dbReference type="SMART" id="SM00234">
    <property type="entry name" value="START"/>
    <property type="match status" value="1"/>
</dbReference>
<dbReference type="SUPFAM" id="SSF55961">
    <property type="entry name" value="Bet v1-like"/>
    <property type="match status" value="1"/>
</dbReference>
<dbReference type="SUPFAM" id="SSF46689">
    <property type="entry name" value="Homeodomain-like"/>
    <property type="match status" value="1"/>
</dbReference>
<dbReference type="PROSITE" id="PS50071">
    <property type="entry name" value="HOMEOBOX_2"/>
    <property type="match status" value="1"/>
</dbReference>
<dbReference type="PROSITE" id="PS50848">
    <property type="entry name" value="START"/>
    <property type="match status" value="1"/>
</dbReference>
<comment type="function">
    <text evidence="4 6">Probable transcription factor involved in the regulation of vascular development. May promote differentiation of precambial and cambial cells.</text>
</comment>
<comment type="subunit">
    <text evidence="8 9">Interacts with ESR1 and ESR2 (PubMed:17376809). Interacts with ZPR3 (PubMed:18408069).</text>
</comment>
<comment type="subcellular location">
    <subcellularLocation>
        <location evidence="11">Nucleus</location>
    </subcellularLocation>
</comment>
<comment type="developmental stage">
    <text evidence="5 10">Expressed in the procambial cells and the developing vascular system of embryos, roots and shoots. Expressed during the early stages of revascularization after cutting experiment.</text>
</comment>
<comment type="induction">
    <text evidence="7 10">By auxin. Repressed by miR165.</text>
</comment>
<comment type="similarity">
    <text evidence="11">Belongs to the HD-ZIP homeobox family. Class III subfamily.</text>
</comment>
<keyword id="KW-0175">Coiled coil</keyword>
<keyword id="KW-0221">Differentiation</keyword>
<keyword id="KW-0238">DNA-binding</keyword>
<keyword id="KW-0371">Homeobox</keyword>
<keyword id="KW-0539">Nucleus</keyword>
<keyword id="KW-1185">Reference proteome</keyword>
<keyword id="KW-0804">Transcription</keyword>
<keyword id="KW-0805">Transcription regulation</keyword>
<organism>
    <name type="scientific">Arabidopsis thaliana</name>
    <name type="common">Mouse-ear cress</name>
    <dbReference type="NCBI Taxonomy" id="3702"/>
    <lineage>
        <taxon>Eukaryota</taxon>
        <taxon>Viridiplantae</taxon>
        <taxon>Streptophyta</taxon>
        <taxon>Embryophyta</taxon>
        <taxon>Tracheophyta</taxon>
        <taxon>Spermatophyta</taxon>
        <taxon>Magnoliopsida</taxon>
        <taxon>eudicotyledons</taxon>
        <taxon>Gunneridae</taxon>
        <taxon>Pentapetalae</taxon>
        <taxon>rosids</taxon>
        <taxon>malvids</taxon>
        <taxon>Brassicales</taxon>
        <taxon>Brassicaceae</taxon>
        <taxon>Camelineae</taxon>
        <taxon>Arabidopsis</taxon>
    </lineage>
</organism>
<name>ATHB8_ARATH</name>
<proteinExistence type="evidence at protein level"/>
<feature type="chain" id="PRO_0000331658" description="Homeobox-leucine zipper protein ATHB-8">
    <location>
        <begin position="1"/>
        <end position="833"/>
    </location>
</feature>
<feature type="domain" description="START" evidence="3">
    <location>
        <begin position="150"/>
        <end position="378"/>
    </location>
</feature>
<feature type="DNA-binding region" description="Homeobox" evidence="2">
    <location>
        <begin position="12"/>
        <end position="75"/>
    </location>
</feature>
<feature type="coiled-coil region" evidence="1">
    <location>
        <begin position="70"/>
        <end position="108"/>
    </location>
</feature>
<reference key="1">
    <citation type="journal article" date="1995" name="Development">
        <title>The expression of the Athb-8 homeobox gene is restricted to provascular cells in Arabidopsis thaliana.</title>
        <authorList>
            <person name="Baima S."/>
            <person name="Nobili F."/>
            <person name="Sessa G."/>
            <person name="Lucchetti S."/>
            <person name="Ruberti I."/>
            <person name="Morelli G."/>
        </authorList>
    </citation>
    <scope>NUCLEOTIDE SEQUENCE [MRNA]</scope>
    <scope>DEVELOPMENTAL STAGE</scope>
    <scope>INDUCTION</scope>
    <source>
        <strain>cv. Columbia</strain>
    </source>
</reference>
<reference key="2">
    <citation type="submission" date="2002-04" db="EMBL/GenBank/DDBJ databases">
        <title>Nucleotide sequence of the Arabidopsis ATHB-8 mRNA, encoding an HD-Zip III protein.</title>
        <authorList>
            <person name="Sessa G."/>
            <person name="Carabelli M."/>
            <person name="Ciarbelli A.R."/>
            <person name="Ruzza V."/>
            <person name="Steindler C."/>
            <person name="Ruberti I."/>
        </authorList>
    </citation>
    <scope>NUCLEOTIDE SEQUENCE [MRNA]</scope>
    <source>
        <strain>cv. Columbia</strain>
    </source>
</reference>
<reference key="3">
    <citation type="journal article" date="1999" name="Nature">
        <title>Sequence and analysis of chromosome 4 of the plant Arabidopsis thaliana.</title>
        <authorList>
            <person name="Mayer K.F.X."/>
            <person name="Schueller C."/>
            <person name="Wambutt R."/>
            <person name="Murphy G."/>
            <person name="Volckaert G."/>
            <person name="Pohl T."/>
            <person name="Duesterhoeft A."/>
            <person name="Stiekema W."/>
            <person name="Entian K.-D."/>
            <person name="Terryn N."/>
            <person name="Harris B."/>
            <person name="Ansorge W."/>
            <person name="Brandt P."/>
            <person name="Grivell L.A."/>
            <person name="Rieger M."/>
            <person name="Weichselgartner M."/>
            <person name="de Simone V."/>
            <person name="Obermaier B."/>
            <person name="Mache R."/>
            <person name="Mueller M."/>
            <person name="Kreis M."/>
            <person name="Delseny M."/>
            <person name="Puigdomenech P."/>
            <person name="Watson M."/>
            <person name="Schmidtheini T."/>
            <person name="Reichert B."/>
            <person name="Portetelle D."/>
            <person name="Perez-Alonso M."/>
            <person name="Boutry M."/>
            <person name="Bancroft I."/>
            <person name="Vos P."/>
            <person name="Hoheisel J."/>
            <person name="Zimmermann W."/>
            <person name="Wedler H."/>
            <person name="Ridley P."/>
            <person name="Langham S.-A."/>
            <person name="McCullagh B."/>
            <person name="Bilham L."/>
            <person name="Robben J."/>
            <person name="van der Schueren J."/>
            <person name="Grymonprez B."/>
            <person name="Chuang Y.-J."/>
            <person name="Vandenbussche F."/>
            <person name="Braeken M."/>
            <person name="Weltjens I."/>
            <person name="Voet M."/>
            <person name="Bastiaens I."/>
            <person name="Aert R."/>
            <person name="Defoor E."/>
            <person name="Weitzenegger T."/>
            <person name="Bothe G."/>
            <person name="Ramsperger U."/>
            <person name="Hilbert H."/>
            <person name="Braun M."/>
            <person name="Holzer E."/>
            <person name="Brandt A."/>
            <person name="Peters S."/>
            <person name="van Staveren M."/>
            <person name="Dirkse W."/>
            <person name="Mooijman P."/>
            <person name="Klein Lankhorst R."/>
            <person name="Rose M."/>
            <person name="Hauf J."/>
            <person name="Koetter P."/>
            <person name="Berneiser S."/>
            <person name="Hempel S."/>
            <person name="Feldpausch M."/>
            <person name="Lamberth S."/>
            <person name="Van den Daele H."/>
            <person name="De Keyser A."/>
            <person name="Buysshaert C."/>
            <person name="Gielen J."/>
            <person name="Villarroel R."/>
            <person name="De Clercq R."/>
            <person name="van Montagu M."/>
            <person name="Rogers J."/>
            <person name="Cronin A."/>
            <person name="Quail M.A."/>
            <person name="Bray-Allen S."/>
            <person name="Clark L."/>
            <person name="Doggett J."/>
            <person name="Hall S."/>
            <person name="Kay M."/>
            <person name="Lennard N."/>
            <person name="McLay K."/>
            <person name="Mayes R."/>
            <person name="Pettett A."/>
            <person name="Rajandream M.A."/>
            <person name="Lyne M."/>
            <person name="Benes V."/>
            <person name="Rechmann S."/>
            <person name="Borkova D."/>
            <person name="Bloecker H."/>
            <person name="Scharfe M."/>
            <person name="Grimm M."/>
            <person name="Loehnert T.-H."/>
            <person name="Dose S."/>
            <person name="de Haan M."/>
            <person name="Maarse A.C."/>
            <person name="Schaefer M."/>
            <person name="Mueller-Auer S."/>
            <person name="Gabel C."/>
            <person name="Fuchs M."/>
            <person name="Fartmann B."/>
            <person name="Granderath K."/>
            <person name="Dauner D."/>
            <person name="Herzl A."/>
            <person name="Neumann S."/>
            <person name="Argiriou A."/>
            <person name="Vitale D."/>
            <person name="Liguori R."/>
            <person name="Piravandi E."/>
            <person name="Massenet O."/>
            <person name="Quigley F."/>
            <person name="Clabauld G."/>
            <person name="Muendlein A."/>
            <person name="Felber R."/>
            <person name="Schnabl S."/>
            <person name="Hiller R."/>
            <person name="Schmidt W."/>
            <person name="Lecharny A."/>
            <person name="Aubourg S."/>
            <person name="Chefdor F."/>
            <person name="Cooke R."/>
            <person name="Berger C."/>
            <person name="Monfort A."/>
            <person name="Casacuberta E."/>
            <person name="Gibbons T."/>
            <person name="Weber N."/>
            <person name="Vandenbol M."/>
            <person name="Bargues M."/>
            <person name="Terol J."/>
            <person name="Torres A."/>
            <person name="Perez-Perez A."/>
            <person name="Purnelle B."/>
            <person name="Bent E."/>
            <person name="Johnson S."/>
            <person name="Tacon D."/>
            <person name="Jesse T."/>
            <person name="Heijnen L."/>
            <person name="Schwarz S."/>
            <person name="Scholler P."/>
            <person name="Heber S."/>
            <person name="Francs P."/>
            <person name="Bielke C."/>
            <person name="Frishman D."/>
            <person name="Haase D."/>
            <person name="Lemcke K."/>
            <person name="Mewes H.-W."/>
            <person name="Stocker S."/>
            <person name="Zaccaria P."/>
            <person name="Bevan M."/>
            <person name="Wilson R.K."/>
            <person name="de la Bastide M."/>
            <person name="Habermann K."/>
            <person name="Parnell L."/>
            <person name="Dedhia N."/>
            <person name="Gnoj L."/>
            <person name="Schutz K."/>
            <person name="Huang E."/>
            <person name="Spiegel L."/>
            <person name="Sekhon M."/>
            <person name="Murray J."/>
            <person name="Sheet P."/>
            <person name="Cordes M."/>
            <person name="Abu-Threideh J."/>
            <person name="Stoneking T."/>
            <person name="Kalicki J."/>
            <person name="Graves T."/>
            <person name="Harmon G."/>
            <person name="Edwards J."/>
            <person name="Latreille P."/>
            <person name="Courtney L."/>
            <person name="Cloud J."/>
            <person name="Abbott A."/>
            <person name="Scott K."/>
            <person name="Johnson D."/>
            <person name="Minx P."/>
            <person name="Bentley D."/>
            <person name="Fulton B."/>
            <person name="Miller N."/>
            <person name="Greco T."/>
            <person name="Kemp K."/>
            <person name="Kramer J."/>
            <person name="Fulton L."/>
            <person name="Mardis E."/>
            <person name="Dante M."/>
            <person name="Pepin K."/>
            <person name="Hillier L.W."/>
            <person name="Nelson J."/>
            <person name="Spieth J."/>
            <person name="Ryan E."/>
            <person name="Andrews S."/>
            <person name="Geisel C."/>
            <person name="Layman D."/>
            <person name="Du H."/>
            <person name="Ali J."/>
            <person name="Berghoff A."/>
            <person name="Jones K."/>
            <person name="Drone K."/>
            <person name="Cotton M."/>
            <person name="Joshu C."/>
            <person name="Antonoiu B."/>
            <person name="Zidanic M."/>
            <person name="Strong C."/>
            <person name="Sun H."/>
            <person name="Lamar B."/>
            <person name="Yordan C."/>
            <person name="Ma P."/>
            <person name="Zhong J."/>
            <person name="Preston R."/>
            <person name="Vil D."/>
            <person name="Shekher M."/>
            <person name="Matero A."/>
            <person name="Shah R."/>
            <person name="Swaby I.K."/>
            <person name="O'Shaughnessy A."/>
            <person name="Rodriguez M."/>
            <person name="Hoffman J."/>
            <person name="Till S."/>
            <person name="Granat S."/>
            <person name="Shohdy N."/>
            <person name="Hasegawa A."/>
            <person name="Hameed A."/>
            <person name="Lodhi M."/>
            <person name="Johnson A."/>
            <person name="Chen E."/>
            <person name="Marra M.A."/>
            <person name="Martienssen R."/>
            <person name="McCombie W.R."/>
        </authorList>
    </citation>
    <scope>NUCLEOTIDE SEQUENCE [LARGE SCALE GENOMIC DNA]</scope>
    <source>
        <strain>cv. Columbia</strain>
    </source>
</reference>
<reference key="4">
    <citation type="journal article" date="2017" name="Plant J.">
        <title>Araport11: a complete reannotation of the Arabidopsis thaliana reference genome.</title>
        <authorList>
            <person name="Cheng C.Y."/>
            <person name="Krishnakumar V."/>
            <person name="Chan A.P."/>
            <person name="Thibaud-Nissen F."/>
            <person name="Schobel S."/>
            <person name="Town C.D."/>
        </authorList>
    </citation>
    <scope>GENOME REANNOTATION</scope>
    <source>
        <strain>cv. Columbia</strain>
    </source>
</reference>
<reference key="5">
    <citation type="journal article" date="2003" name="Science">
        <title>Empirical analysis of transcriptional activity in the Arabidopsis genome.</title>
        <authorList>
            <person name="Yamada K."/>
            <person name="Lim J."/>
            <person name="Dale J.M."/>
            <person name="Chen H."/>
            <person name="Shinn P."/>
            <person name="Palm C.J."/>
            <person name="Southwick A.M."/>
            <person name="Wu H.C."/>
            <person name="Kim C.J."/>
            <person name="Nguyen M."/>
            <person name="Pham P.K."/>
            <person name="Cheuk R.F."/>
            <person name="Karlin-Newmann G."/>
            <person name="Liu S.X."/>
            <person name="Lam B."/>
            <person name="Sakano H."/>
            <person name="Wu T."/>
            <person name="Yu G."/>
            <person name="Miranda M."/>
            <person name="Quach H.L."/>
            <person name="Tripp M."/>
            <person name="Chang C.H."/>
            <person name="Lee J.M."/>
            <person name="Toriumi M.J."/>
            <person name="Chan M.M."/>
            <person name="Tang C.C."/>
            <person name="Onodera C.S."/>
            <person name="Deng J.M."/>
            <person name="Akiyama K."/>
            <person name="Ansari Y."/>
            <person name="Arakawa T."/>
            <person name="Banh J."/>
            <person name="Banno F."/>
            <person name="Bowser L."/>
            <person name="Brooks S.Y."/>
            <person name="Carninci P."/>
            <person name="Chao Q."/>
            <person name="Choy N."/>
            <person name="Enju A."/>
            <person name="Goldsmith A.D."/>
            <person name="Gurjal M."/>
            <person name="Hansen N.F."/>
            <person name="Hayashizaki Y."/>
            <person name="Johnson-Hopson C."/>
            <person name="Hsuan V.W."/>
            <person name="Iida K."/>
            <person name="Karnes M."/>
            <person name="Khan S."/>
            <person name="Koesema E."/>
            <person name="Ishida J."/>
            <person name="Jiang P.X."/>
            <person name="Jones T."/>
            <person name="Kawai J."/>
            <person name="Kamiya A."/>
            <person name="Meyers C."/>
            <person name="Nakajima M."/>
            <person name="Narusaka M."/>
            <person name="Seki M."/>
            <person name="Sakurai T."/>
            <person name="Satou M."/>
            <person name="Tamse R."/>
            <person name="Vaysberg M."/>
            <person name="Wallender E.K."/>
            <person name="Wong C."/>
            <person name="Yamamura Y."/>
            <person name="Yuan S."/>
            <person name="Shinozaki K."/>
            <person name="Davis R.W."/>
            <person name="Theologis A."/>
            <person name="Ecker J.R."/>
        </authorList>
    </citation>
    <scope>NUCLEOTIDE SEQUENCE [LARGE SCALE MRNA]</scope>
    <source>
        <strain>cv. Columbia</strain>
    </source>
</reference>
<reference key="6">
    <citation type="journal article" date="2001" name="Plant Physiol.">
        <title>The arabidopsis ATHB-8 HD-zip protein acts as a differentiation-promoting transcription factor of the vascular meristems.</title>
        <authorList>
            <person name="Baima S."/>
            <person name="Possenti M."/>
            <person name="Matteucci A."/>
            <person name="Wisman E."/>
            <person name="Altamura M.M."/>
            <person name="Ruberti I."/>
            <person name="Morelli G."/>
        </authorList>
    </citation>
    <scope>FUNCTION</scope>
</reference>
<reference key="7">
    <citation type="journal article" date="2002" name="Planta">
        <title>Cell cycling frequency and expression of the homeobox gene ATHB-8 during leaf vein development in Arabidopsis.</title>
        <authorList>
            <person name="Kang J."/>
            <person name="Dengler N."/>
        </authorList>
    </citation>
    <scope>DEVELOPMENTAL STAGE</scope>
</reference>
<reference key="8">
    <citation type="journal article" date="2005" name="Plant Cell">
        <title>Class III homeodomain-leucine zipper gene family members have overlapping, antagonistic, and distinct roles in Arabidopsis development.</title>
        <authorList>
            <person name="Prigge M.J."/>
            <person name="Otsuga D."/>
            <person name="Alonso J.M."/>
            <person name="Ecker J.R."/>
            <person name="Drews G.N."/>
            <person name="Clark S.E."/>
        </authorList>
    </citation>
    <scope>FUNCTION</scope>
</reference>
<reference key="9">
    <citation type="journal article" date="2006" name="Evol. Dev.">
        <title>Evolution of the class III HD-Zip gene family in land plants.</title>
        <authorList>
            <person name="Prigge M.J."/>
            <person name="Clark S.E."/>
        </authorList>
    </citation>
    <scope>GENE FAMILY</scope>
</reference>
<reference key="10">
    <citation type="journal article" date="2007" name="Development">
        <title>The AP2 transcription factors DORNROSCHEN and DORNROSCHEN-LIKE redundantly control Arabidopsis embryo patterning via interaction with PHAVOLUTA.</title>
        <authorList>
            <person name="Chandler J.W."/>
            <person name="Cole M."/>
            <person name="Flier A."/>
            <person name="Grewe B."/>
            <person name="Werr W."/>
        </authorList>
    </citation>
    <scope>INTERACTION WITH ESR1 AND ESR2</scope>
</reference>
<reference key="11">
    <citation type="journal article" date="2007" name="Plant Cell Physiol.">
        <title>Overexpression of miR165 affects apical meristem formation, organ polarity establishment and vascular development in Arabidopsis.</title>
        <authorList>
            <person name="Zhou G.-K."/>
            <person name="Kubo M."/>
            <person name="Zhong R."/>
            <person name="Demura T."/>
            <person name="Ye Z.-H."/>
        </authorList>
    </citation>
    <scope>INDUCTION</scope>
</reference>
<reference key="12">
    <citation type="journal article" date="2008" name="Plant Cell">
        <title>HD-ZIP III activity is modulated by competitive inhibitors via a feedback loop in Arabidopsis shoot apical meristem development.</title>
        <authorList>
            <person name="Kim Y.S."/>
            <person name="Kim S.G."/>
            <person name="Lee M."/>
            <person name="Lee I."/>
            <person name="Park H.Y."/>
            <person name="Seo P.J."/>
            <person name="Jung J.H."/>
            <person name="Kwon E.J."/>
            <person name="Suh S.W."/>
            <person name="Paek K.H."/>
            <person name="Park C.M."/>
        </authorList>
    </citation>
    <scope>INTERACTION WITH ZPR3</scope>
</reference>
<reference key="13">
    <citation type="journal article" date="2014" name="Mol. Phylogenet. Evol.">
        <title>Origin of a novel regulatory module by duplication and degeneration of an ancient plant transcription factor.</title>
        <authorList>
            <person name="Floyd S.K."/>
            <person name="Ryan J.G."/>
            <person name="Conway S.J."/>
            <person name="Brenner E."/>
            <person name="Burris K.P."/>
            <person name="Burris J.N."/>
            <person name="Chen T."/>
            <person name="Edger P.P."/>
            <person name="Graham S.W."/>
            <person name="Leebens-Mack J.H."/>
            <person name="Pires J.C."/>
            <person name="Rothfels C.J."/>
            <person name="Sigel E.M."/>
            <person name="Stevenson D.W."/>
            <person name="Neal Stewart C. Jr."/>
            <person name="Wong G.K."/>
            <person name="Bowman J.L."/>
        </authorList>
    </citation>
    <scope>GENE FAMILY</scope>
</reference>
<accession>Q39123</accession>
<protein>
    <recommendedName>
        <fullName>Homeobox-leucine zipper protein ATHB-8</fullName>
    </recommendedName>
    <alternativeName>
        <fullName>HD-ZIP protein ATHB-8</fullName>
    </alternativeName>
    <alternativeName>
        <fullName>Homeodomain transcription factor ATHB-8</fullName>
    </alternativeName>
</protein>